<reference key="1">
    <citation type="submission" date="2006-06" db="EMBL/GenBank/DDBJ databases">
        <title>Complete sequence of Rubrobacter xylanophilus DSM 9941.</title>
        <authorList>
            <consortium name="US DOE Joint Genome Institute"/>
            <person name="Copeland A."/>
            <person name="Lucas S."/>
            <person name="Lapidus A."/>
            <person name="Barry K."/>
            <person name="Detter J.C."/>
            <person name="Glavina del Rio T."/>
            <person name="Hammon N."/>
            <person name="Israni S."/>
            <person name="Dalin E."/>
            <person name="Tice H."/>
            <person name="Pitluck S."/>
            <person name="Munk A.C."/>
            <person name="Brettin T."/>
            <person name="Bruce D."/>
            <person name="Han C."/>
            <person name="Tapia R."/>
            <person name="Gilna P."/>
            <person name="Schmutz J."/>
            <person name="Larimer F."/>
            <person name="Land M."/>
            <person name="Hauser L."/>
            <person name="Kyrpides N."/>
            <person name="Lykidis A."/>
            <person name="da Costa M.S."/>
            <person name="Rainey F.A."/>
            <person name="Empadinhas N."/>
            <person name="Jolivet E."/>
            <person name="Battista J.R."/>
            <person name="Richardson P."/>
        </authorList>
    </citation>
    <scope>NUCLEOTIDE SEQUENCE [LARGE SCALE GENOMIC DNA]</scope>
    <source>
        <strain>DSM 9941 / JCM 11954 / NBRC 16129 / PRD-1</strain>
    </source>
</reference>
<proteinExistence type="inferred from homology"/>
<comment type="function">
    <text evidence="1">Together with its co-chaperonin GroES, plays an essential role in assisting protein folding. The GroEL-GroES system forms a nano-cage that allows encapsulation of the non-native substrate proteins and provides a physical environment optimized to promote and accelerate protein folding.</text>
</comment>
<comment type="catalytic activity">
    <reaction evidence="1">
        <text>ATP + H2O + a folded polypeptide = ADP + phosphate + an unfolded polypeptide.</text>
        <dbReference type="EC" id="5.6.1.7"/>
    </reaction>
</comment>
<comment type="subunit">
    <text evidence="1">Forms a cylinder of 14 subunits composed of two heptameric rings stacked back-to-back. Interacts with the co-chaperonin GroES.</text>
</comment>
<comment type="subcellular location">
    <subcellularLocation>
        <location evidence="1">Cytoplasm</location>
    </subcellularLocation>
</comment>
<comment type="similarity">
    <text evidence="1">Belongs to the chaperonin (HSP60) family.</text>
</comment>
<keyword id="KW-0067">ATP-binding</keyword>
<keyword id="KW-0143">Chaperone</keyword>
<keyword id="KW-0963">Cytoplasm</keyword>
<keyword id="KW-0413">Isomerase</keyword>
<keyword id="KW-0547">Nucleotide-binding</keyword>
<keyword id="KW-1185">Reference proteome</keyword>
<sequence>MAHKELKFNTEARQALERGVNKLADAVKVTLGPKGQYVVLDKKFGSPTITNDGVTIAREIELEDIFENQGAQLLKEVATKTNDVAGDGTTTATVLAQIIVREGLKNVAAGANPVILRNGIEKAVEKAVEAIREQAKEISGKDEIARVGAISARSEEVGNVIAEAIDKVGKDGVVNVEEGQTLGIDLEFTEGMQFDKGYLSPYFVTDQDRMEAVLEDPYILIANQKISNVQDLLPLLNQVMQANKPLLIIAEDVEGEALATLIVNKLRGTFQSCAVKAPGFGDRRKRMMEDIAILTGGEVITEELGLKLENTQLSQLGRARKVVVTKDDTTIVDGAGDPEQIKGRINQIKAELETTDSDFDREKLQERLAKLAGGVAVIKVGAATETELKEKKHRVEDALSATRAALEEGIVPGGGVALLKAQKAVGELLDELDGDERTGARIVYRALEEPIRQIAENAGADGSIVVDKVRAQGDSIGFNALTGGYEDLVAAGVIDPAMVTRSALQNAASIAGLLVTTDVVVAEPEEEQPAMPGGGMGGMM</sequence>
<name>CH60_RUBXD</name>
<organism>
    <name type="scientific">Rubrobacter xylanophilus (strain DSM 9941 / JCM 11954 / NBRC 16129 / PRD-1)</name>
    <dbReference type="NCBI Taxonomy" id="266117"/>
    <lineage>
        <taxon>Bacteria</taxon>
        <taxon>Bacillati</taxon>
        <taxon>Actinomycetota</taxon>
        <taxon>Rubrobacteria</taxon>
        <taxon>Rubrobacterales</taxon>
        <taxon>Rubrobacteraceae</taxon>
        <taxon>Rubrobacter</taxon>
    </lineage>
</organism>
<gene>
    <name evidence="1" type="primary">groEL</name>
    <name evidence="1" type="synonym">groL</name>
    <name type="ordered locus">Rxyl_0814</name>
</gene>
<evidence type="ECO:0000255" key="1">
    <source>
        <dbReference type="HAMAP-Rule" id="MF_00600"/>
    </source>
</evidence>
<dbReference type="EC" id="5.6.1.7" evidence="1"/>
<dbReference type="EMBL" id="CP000386">
    <property type="protein sequence ID" value="ABG03782.1"/>
    <property type="molecule type" value="Genomic_DNA"/>
</dbReference>
<dbReference type="RefSeq" id="WP_011563800.1">
    <property type="nucleotide sequence ID" value="NC_008148.1"/>
</dbReference>
<dbReference type="SMR" id="Q1AXU6"/>
<dbReference type="STRING" id="266117.Rxyl_0814"/>
<dbReference type="KEGG" id="rxy:Rxyl_0814"/>
<dbReference type="eggNOG" id="COG0459">
    <property type="taxonomic scope" value="Bacteria"/>
</dbReference>
<dbReference type="HOGENOM" id="CLU_016503_3_0_11"/>
<dbReference type="OrthoDB" id="9766614at2"/>
<dbReference type="PhylomeDB" id="Q1AXU6"/>
<dbReference type="Proteomes" id="UP000006637">
    <property type="component" value="Chromosome"/>
</dbReference>
<dbReference type="GO" id="GO:0005737">
    <property type="term" value="C:cytoplasm"/>
    <property type="evidence" value="ECO:0007669"/>
    <property type="project" value="UniProtKB-SubCell"/>
</dbReference>
<dbReference type="GO" id="GO:0005524">
    <property type="term" value="F:ATP binding"/>
    <property type="evidence" value="ECO:0007669"/>
    <property type="project" value="UniProtKB-UniRule"/>
</dbReference>
<dbReference type="GO" id="GO:0140662">
    <property type="term" value="F:ATP-dependent protein folding chaperone"/>
    <property type="evidence" value="ECO:0007669"/>
    <property type="project" value="InterPro"/>
</dbReference>
<dbReference type="GO" id="GO:0016853">
    <property type="term" value="F:isomerase activity"/>
    <property type="evidence" value="ECO:0007669"/>
    <property type="project" value="UniProtKB-KW"/>
</dbReference>
<dbReference type="GO" id="GO:0051082">
    <property type="term" value="F:unfolded protein binding"/>
    <property type="evidence" value="ECO:0007669"/>
    <property type="project" value="UniProtKB-UniRule"/>
</dbReference>
<dbReference type="GO" id="GO:0042026">
    <property type="term" value="P:protein refolding"/>
    <property type="evidence" value="ECO:0007669"/>
    <property type="project" value="UniProtKB-UniRule"/>
</dbReference>
<dbReference type="CDD" id="cd03344">
    <property type="entry name" value="GroEL"/>
    <property type="match status" value="1"/>
</dbReference>
<dbReference type="FunFam" id="3.50.7.10:FF:000001">
    <property type="entry name" value="60 kDa chaperonin"/>
    <property type="match status" value="1"/>
</dbReference>
<dbReference type="Gene3D" id="3.50.7.10">
    <property type="entry name" value="GroEL"/>
    <property type="match status" value="1"/>
</dbReference>
<dbReference type="Gene3D" id="1.10.560.10">
    <property type="entry name" value="GroEL-like equatorial domain"/>
    <property type="match status" value="1"/>
</dbReference>
<dbReference type="Gene3D" id="3.30.260.10">
    <property type="entry name" value="TCP-1-like chaperonin intermediate domain"/>
    <property type="match status" value="1"/>
</dbReference>
<dbReference type="HAMAP" id="MF_00600">
    <property type="entry name" value="CH60"/>
    <property type="match status" value="1"/>
</dbReference>
<dbReference type="InterPro" id="IPR001844">
    <property type="entry name" value="Cpn60/GroEL"/>
</dbReference>
<dbReference type="InterPro" id="IPR002423">
    <property type="entry name" value="Cpn60/GroEL/TCP-1"/>
</dbReference>
<dbReference type="InterPro" id="IPR027409">
    <property type="entry name" value="GroEL-like_apical_dom_sf"/>
</dbReference>
<dbReference type="InterPro" id="IPR027413">
    <property type="entry name" value="GROEL-like_equatorial_sf"/>
</dbReference>
<dbReference type="InterPro" id="IPR027410">
    <property type="entry name" value="TCP-1-like_intermed_sf"/>
</dbReference>
<dbReference type="NCBIfam" id="TIGR02348">
    <property type="entry name" value="GroEL"/>
    <property type="match status" value="1"/>
</dbReference>
<dbReference type="NCBIfam" id="NF000592">
    <property type="entry name" value="PRK00013.1"/>
    <property type="match status" value="1"/>
</dbReference>
<dbReference type="NCBIfam" id="NF009487">
    <property type="entry name" value="PRK12849.1"/>
    <property type="match status" value="1"/>
</dbReference>
<dbReference type="NCBIfam" id="NF009488">
    <property type="entry name" value="PRK12850.1"/>
    <property type="match status" value="1"/>
</dbReference>
<dbReference type="NCBIfam" id="NF009489">
    <property type="entry name" value="PRK12851.1"/>
    <property type="match status" value="1"/>
</dbReference>
<dbReference type="PANTHER" id="PTHR45633">
    <property type="entry name" value="60 KDA HEAT SHOCK PROTEIN, MITOCHONDRIAL"/>
    <property type="match status" value="1"/>
</dbReference>
<dbReference type="Pfam" id="PF00118">
    <property type="entry name" value="Cpn60_TCP1"/>
    <property type="match status" value="1"/>
</dbReference>
<dbReference type="PRINTS" id="PR00298">
    <property type="entry name" value="CHAPERONIN60"/>
</dbReference>
<dbReference type="SUPFAM" id="SSF52029">
    <property type="entry name" value="GroEL apical domain-like"/>
    <property type="match status" value="1"/>
</dbReference>
<dbReference type="SUPFAM" id="SSF48592">
    <property type="entry name" value="GroEL equatorial domain-like"/>
    <property type="match status" value="1"/>
</dbReference>
<dbReference type="SUPFAM" id="SSF54849">
    <property type="entry name" value="GroEL-intermediate domain like"/>
    <property type="match status" value="1"/>
</dbReference>
<feature type="chain" id="PRO_0000256980" description="Chaperonin GroEL">
    <location>
        <begin position="1"/>
        <end position="540"/>
    </location>
</feature>
<feature type="binding site" evidence="1">
    <location>
        <begin position="30"/>
        <end position="33"/>
    </location>
    <ligand>
        <name>ATP</name>
        <dbReference type="ChEBI" id="CHEBI:30616"/>
    </ligand>
</feature>
<feature type="binding site" evidence="1">
    <location>
        <begin position="87"/>
        <end position="91"/>
    </location>
    <ligand>
        <name>ATP</name>
        <dbReference type="ChEBI" id="CHEBI:30616"/>
    </ligand>
</feature>
<feature type="binding site" evidence="1">
    <location>
        <position position="414"/>
    </location>
    <ligand>
        <name>ATP</name>
        <dbReference type="ChEBI" id="CHEBI:30616"/>
    </ligand>
</feature>
<feature type="binding site" evidence="1">
    <location>
        <begin position="479"/>
        <end position="481"/>
    </location>
    <ligand>
        <name>ATP</name>
        <dbReference type="ChEBI" id="CHEBI:30616"/>
    </ligand>
</feature>
<feature type="binding site" evidence="1">
    <location>
        <position position="495"/>
    </location>
    <ligand>
        <name>ATP</name>
        <dbReference type="ChEBI" id="CHEBI:30616"/>
    </ligand>
</feature>
<accession>Q1AXU6</accession>
<protein>
    <recommendedName>
        <fullName evidence="1">Chaperonin GroEL</fullName>
        <ecNumber evidence="1">5.6.1.7</ecNumber>
    </recommendedName>
    <alternativeName>
        <fullName evidence="1">60 kDa chaperonin</fullName>
    </alternativeName>
    <alternativeName>
        <fullName evidence="1">Chaperonin-60</fullName>
        <shortName evidence="1">Cpn60</shortName>
    </alternativeName>
</protein>